<protein>
    <recommendedName>
        <fullName>Ubiquitin carboxyl-terminal hydrolase 36</fullName>
        <ecNumber>3.4.19.12</ecNumber>
    </recommendedName>
    <alternativeName>
        <fullName>Deubiquitinating enzyme 36</fullName>
    </alternativeName>
    <alternativeName>
        <fullName>Protein scrawny</fullName>
    </alternativeName>
    <alternativeName>
        <fullName>Ubiquitin thioesterase 36</fullName>
    </alternativeName>
    <alternativeName>
        <fullName>Ubiquitin-specific-processing protease 36</fullName>
    </alternativeName>
</protein>
<evidence type="ECO:0000250" key="1"/>
<evidence type="ECO:0000250" key="2">
    <source>
        <dbReference type="UniProtKB" id="Q9VRP5"/>
    </source>
</evidence>
<evidence type="ECO:0000255" key="3">
    <source>
        <dbReference type="PROSITE-ProRule" id="PRU10092"/>
    </source>
</evidence>
<evidence type="ECO:0000255" key="4">
    <source>
        <dbReference type="PROSITE-ProRule" id="PRU10093"/>
    </source>
</evidence>
<evidence type="ECO:0000256" key="5">
    <source>
        <dbReference type="SAM" id="MobiDB-lite"/>
    </source>
</evidence>
<evidence type="ECO:0000305" key="6"/>
<dbReference type="EC" id="3.4.19.12"/>
<dbReference type="EMBL" id="CH954178">
    <property type="protein sequence ID" value="EDV51044.1"/>
    <property type="molecule type" value="Genomic_DNA"/>
</dbReference>
<dbReference type="SMR" id="B3NC86"/>
<dbReference type="EnsemblMetazoa" id="FBtr0410345">
    <property type="protein sequence ID" value="FBpp0368780"/>
    <property type="gene ID" value="FBgn0107537"/>
</dbReference>
<dbReference type="EnsemblMetazoa" id="XM_026977548.1">
    <property type="protein sequence ID" value="XP_026833349.1"/>
    <property type="gene ID" value="LOC6544695"/>
</dbReference>
<dbReference type="GeneID" id="6544695"/>
<dbReference type="KEGG" id="der:6544695"/>
<dbReference type="CTD" id="38648"/>
<dbReference type="eggNOG" id="KOG1865">
    <property type="taxonomic scope" value="Eukaryota"/>
</dbReference>
<dbReference type="HOGENOM" id="CLU_006208_0_0_1"/>
<dbReference type="OMA" id="VCAMAKT"/>
<dbReference type="OrthoDB" id="420187at2759"/>
<dbReference type="PhylomeDB" id="B3NC86"/>
<dbReference type="ChiTaRS" id="scny">
    <property type="organism name" value="fly"/>
</dbReference>
<dbReference type="Proteomes" id="UP000008711">
    <property type="component" value="Unassembled WGS sequence"/>
</dbReference>
<dbReference type="GO" id="GO:0005829">
    <property type="term" value="C:cytosol"/>
    <property type="evidence" value="ECO:0007669"/>
    <property type="project" value="TreeGrafter"/>
</dbReference>
<dbReference type="GO" id="GO:0005730">
    <property type="term" value="C:nucleolus"/>
    <property type="evidence" value="ECO:0000250"/>
    <property type="project" value="UniProtKB"/>
</dbReference>
<dbReference type="GO" id="GO:0004843">
    <property type="term" value="F:cysteine-type deubiquitinase activity"/>
    <property type="evidence" value="ECO:0000250"/>
    <property type="project" value="UniProtKB"/>
</dbReference>
<dbReference type="GO" id="GO:0061578">
    <property type="term" value="F:K63-linked deubiquitinase activity"/>
    <property type="evidence" value="ECO:0007669"/>
    <property type="project" value="EnsemblMetazoa"/>
</dbReference>
<dbReference type="GO" id="GO:0030718">
    <property type="term" value="P:germ-line stem cell population maintenance"/>
    <property type="evidence" value="ECO:0000250"/>
    <property type="project" value="UniProtKB"/>
</dbReference>
<dbReference type="GO" id="GO:0031507">
    <property type="term" value="P:heterochromatin formation"/>
    <property type="evidence" value="ECO:0007669"/>
    <property type="project" value="EnsemblMetazoa"/>
</dbReference>
<dbReference type="GO" id="GO:0002785">
    <property type="term" value="P:negative regulation of antimicrobial peptide production"/>
    <property type="evidence" value="ECO:0007669"/>
    <property type="project" value="EnsemblMetazoa"/>
</dbReference>
<dbReference type="GO" id="GO:0045824">
    <property type="term" value="P:negative regulation of innate immune response"/>
    <property type="evidence" value="ECO:0007669"/>
    <property type="project" value="EnsemblMetazoa"/>
</dbReference>
<dbReference type="GO" id="GO:0016242">
    <property type="term" value="P:negative regulation of macroautophagy"/>
    <property type="evidence" value="ECO:0000250"/>
    <property type="project" value="UniProtKB"/>
</dbReference>
<dbReference type="GO" id="GO:0061060">
    <property type="term" value="P:negative regulation of peptidoglycan recognition protein signaling pathway"/>
    <property type="evidence" value="ECO:0007669"/>
    <property type="project" value="EnsemblMetazoa"/>
</dbReference>
<dbReference type="GO" id="GO:1901800">
    <property type="term" value="P:positive regulation of proteasomal protein catabolic process"/>
    <property type="evidence" value="ECO:0007669"/>
    <property type="project" value="EnsemblMetazoa"/>
</dbReference>
<dbReference type="GO" id="GO:0016579">
    <property type="term" value="P:protein deubiquitination"/>
    <property type="evidence" value="ECO:0000250"/>
    <property type="project" value="UniProtKB"/>
</dbReference>
<dbReference type="GO" id="GO:0006508">
    <property type="term" value="P:proteolysis"/>
    <property type="evidence" value="ECO:0007669"/>
    <property type="project" value="UniProtKB-KW"/>
</dbReference>
<dbReference type="GO" id="GO:0042981">
    <property type="term" value="P:regulation of apoptotic process"/>
    <property type="evidence" value="ECO:0007669"/>
    <property type="project" value="EnsemblMetazoa"/>
</dbReference>
<dbReference type="GO" id="GO:0035019">
    <property type="term" value="P:somatic stem cell population maintenance"/>
    <property type="evidence" value="ECO:0000250"/>
    <property type="project" value="UniProtKB"/>
</dbReference>
<dbReference type="CDD" id="cd02661">
    <property type="entry name" value="Peptidase_C19E"/>
    <property type="match status" value="1"/>
</dbReference>
<dbReference type="FunFam" id="3.90.70.10:FF:000085">
    <property type="entry name" value="Ubiquitin carboxyl-terminal hydrolase 36"/>
    <property type="match status" value="1"/>
</dbReference>
<dbReference type="Gene3D" id="3.90.70.10">
    <property type="entry name" value="Cysteine proteinases"/>
    <property type="match status" value="1"/>
</dbReference>
<dbReference type="InterPro" id="IPR038765">
    <property type="entry name" value="Papain-like_cys_pep_sf"/>
</dbReference>
<dbReference type="InterPro" id="IPR050164">
    <property type="entry name" value="Peptidase_C19"/>
</dbReference>
<dbReference type="InterPro" id="IPR001394">
    <property type="entry name" value="Peptidase_C19_UCH"/>
</dbReference>
<dbReference type="InterPro" id="IPR018200">
    <property type="entry name" value="USP_CS"/>
</dbReference>
<dbReference type="InterPro" id="IPR028889">
    <property type="entry name" value="USP_dom"/>
</dbReference>
<dbReference type="PANTHER" id="PTHR24006">
    <property type="entry name" value="UBIQUITIN CARBOXYL-TERMINAL HYDROLASE"/>
    <property type="match status" value="1"/>
</dbReference>
<dbReference type="PANTHER" id="PTHR24006:SF758">
    <property type="entry name" value="UBIQUITIN CARBOXYL-TERMINAL HYDROLASE 36"/>
    <property type="match status" value="1"/>
</dbReference>
<dbReference type="Pfam" id="PF00443">
    <property type="entry name" value="UCH"/>
    <property type="match status" value="1"/>
</dbReference>
<dbReference type="SUPFAM" id="SSF54001">
    <property type="entry name" value="Cysteine proteinases"/>
    <property type="match status" value="1"/>
</dbReference>
<dbReference type="PROSITE" id="PS00972">
    <property type="entry name" value="USP_1"/>
    <property type="match status" value="1"/>
</dbReference>
<dbReference type="PROSITE" id="PS00973">
    <property type="entry name" value="USP_2"/>
    <property type="match status" value="1"/>
</dbReference>
<dbReference type="PROSITE" id="PS50235">
    <property type="entry name" value="USP_3"/>
    <property type="match status" value="1"/>
</dbReference>
<gene>
    <name type="primary">Usp36</name>
    <name type="synonym">scny</name>
    <name type="ORF">GG15285</name>
</gene>
<keyword id="KW-0378">Hydrolase</keyword>
<keyword id="KW-0539">Nucleus</keyword>
<keyword id="KW-0597">Phosphoprotein</keyword>
<keyword id="KW-0645">Protease</keyword>
<keyword id="KW-0788">Thiol protease</keyword>
<keyword id="KW-0833">Ubl conjugation pathway</keyword>
<comment type="function">
    <text evidence="2">Required for maintaining multiple types of adult stem cells, including male and female germline, epithelial follicle cell and intestinal stem cells. May function as a transcriptional repressor by continually deubiquiting histone H2B at the promoters of genes critical for cellular differentiation, thereby preventing histone H3 'Lys-4' trimethylation (H3K4). Controls selective autophagy activation by ubiquitinated proteins.</text>
</comment>
<comment type="catalytic activity">
    <reaction>
        <text>Thiol-dependent hydrolysis of ester, thioester, amide, peptide and isopeptide bonds formed by the C-terminal Gly of ubiquitin (a 76-residue protein attached to proteins as an intracellular targeting signal).</text>
        <dbReference type="EC" id="3.4.19.12"/>
    </reaction>
</comment>
<comment type="subunit">
    <text evidence="1">Interacts with atms/PAF1, but not with CycT.</text>
</comment>
<comment type="subcellular location">
    <subcellularLocation>
        <location evidence="1">Nucleus</location>
        <location evidence="1">Nucleolus</location>
    </subcellularLocation>
</comment>
<comment type="similarity">
    <text evidence="6">Belongs to the peptidase C19 family.</text>
</comment>
<feature type="chain" id="PRO_0000378496" description="Ubiquitin carboxyl-terminal hydrolase 36">
    <location>
        <begin position="1"/>
        <end position="1085"/>
    </location>
</feature>
<feature type="domain" description="USP">
    <location>
        <begin position="173"/>
        <end position="481"/>
    </location>
</feature>
<feature type="region of interest" description="Disordered" evidence="5">
    <location>
        <begin position="23"/>
        <end position="47"/>
    </location>
</feature>
<feature type="region of interest" description="Disordered" evidence="5">
    <location>
        <begin position="104"/>
        <end position="149"/>
    </location>
</feature>
<feature type="region of interest" description="Disordered" evidence="5">
    <location>
        <begin position="489"/>
        <end position="730"/>
    </location>
</feature>
<feature type="region of interest" description="Disordered" evidence="5">
    <location>
        <begin position="745"/>
        <end position="888"/>
    </location>
</feature>
<feature type="region of interest" description="Disordered" evidence="5">
    <location>
        <begin position="963"/>
        <end position="1030"/>
    </location>
</feature>
<feature type="region of interest" description="Disordered" evidence="5">
    <location>
        <begin position="1043"/>
        <end position="1085"/>
    </location>
</feature>
<feature type="compositionally biased region" description="Low complexity" evidence="5">
    <location>
        <begin position="23"/>
        <end position="36"/>
    </location>
</feature>
<feature type="compositionally biased region" description="Low complexity" evidence="5">
    <location>
        <begin position="503"/>
        <end position="518"/>
    </location>
</feature>
<feature type="compositionally biased region" description="Polar residues" evidence="5">
    <location>
        <begin position="532"/>
        <end position="542"/>
    </location>
</feature>
<feature type="compositionally biased region" description="Low complexity" evidence="5">
    <location>
        <begin position="588"/>
        <end position="609"/>
    </location>
</feature>
<feature type="compositionally biased region" description="Basic and acidic residues" evidence="5">
    <location>
        <begin position="642"/>
        <end position="651"/>
    </location>
</feature>
<feature type="compositionally biased region" description="Polar residues" evidence="5">
    <location>
        <begin position="705"/>
        <end position="730"/>
    </location>
</feature>
<feature type="compositionally biased region" description="Acidic residues" evidence="5">
    <location>
        <begin position="749"/>
        <end position="758"/>
    </location>
</feature>
<feature type="compositionally biased region" description="Low complexity" evidence="5">
    <location>
        <begin position="768"/>
        <end position="778"/>
    </location>
</feature>
<feature type="compositionally biased region" description="Pro residues" evidence="5">
    <location>
        <begin position="779"/>
        <end position="788"/>
    </location>
</feature>
<feature type="compositionally biased region" description="Acidic residues" evidence="5">
    <location>
        <begin position="805"/>
        <end position="818"/>
    </location>
</feature>
<feature type="compositionally biased region" description="Polar residues" evidence="5">
    <location>
        <begin position="822"/>
        <end position="844"/>
    </location>
</feature>
<feature type="compositionally biased region" description="Polar residues" evidence="5">
    <location>
        <begin position="859"/>
        <end position="884"/>
    </location>
</feature>
<feature type="compositionally biased region" description="Low complexity" evidence="5">
    <location>
        <begin position="987"/>
        <end position="998"/>
    </location>
</feature>
<feature type="compositionally biased region" description="Low complexity" evidence="5">
    <location>
        <begin position="1056"/>
        <end position="1066"/>
    </location>
</feature>
<feature type="active site" description="Nucleophile" evidence="3 4">
    <location>
        <position position="182"/>
    </location>
</feature>
<feature type="active site" description="Proton acceptor" evidence="3 4">
    <location>
        <position position="440"/>
    </location>
</feature>
<feature type="modified residue" description="Phosphoserine" evidence="1">
    <location>
        <position position="514"/>
    </location>
</feature>
<feature type="modified residue" description="Phosphoserine" evidence="1">
    <location>
        <position position="516"/>
    </location>
</feature>
<feature type="modified residue" description="Phosphothreonine" evidence="1">
    <location>
        <position position="660"/>
    </location>
</feature>
<feature type="modified residue" description="Phosphothreonine" evidence="1">
    <location>
        <position position="664"/>
    </location>
</feature>
<feature type="modified residue" description="Phosphoserine" evidence="1">
    <location>
        <position position="674"/>
    </location>
</feature>
<feature type="modified residue" description="Phosphoserine" evidence="1">
    <location>
        <position position="676"/>
    </location>
</feature>
<feature type="modified residue" description="Phosphoserine" evidence="1">
    <location>
        <position position="749"/>
    </location>
</feature>
<feature type="modified residue" description="Phosphoserine" evidence="1">
    <location>
        <position position="781"/>
    </location>
</feature>
<feature type="modified residue" description="Phosphothreonine" evidence="1">
    <location>
        <position position="784"/>
    </location>
</feature>
<feature type="modified residue" description="Phosphoserine" evidence="1">
    <location>
        <position position="787"/>
    </location>
</feature>
<feature type="modified residue" description="Phosphothreonine" evidence="1">
    <location>
        <position position="825"/>
    </location>
</feature>
<feature type="modified residue" description="Phosphoserine" evidence="1">
    <location>
        <position position="843"/>
    </location>
</feature>
<feature type="modified residue" description="Phosphothreonine" evidence="1">
    <location>
        <position position="846"/>
    </location>
</feature>
<accession>B3NC86</accession>
<organism>
    <name type="scientific">Drosophila erecta</name>
    <name type="common">Fruit fly</name>
    <dbReference type="NCBI Taxonomy" id="7220"/>
    <lineage>
        <taxon>Eukaryota</taxon>
        <taxon>Metazoa</taxon>
        <taxon>Ecdysozoa</taxon>
        <taxon>Arthropoda</taxon>
        <taxon>Hexapoda</taxon>
        <taxon>Insecta</taxon>
        <taxon>Pterygota</taxon>
        <taxon>Neoptera</taxon>
        <taxon>Endopterygota</taxon>
        <taxon>Diptera</taxon>
        <taxon>Brachycera</taxon>
        <taxon>Muscomorpha</taxon>
        <taxon>Ephydroidea</taxon>
        <taxon>Drosophilidae</taxon>
        <taxon>Drosophila</taxon>
        <taxon>Sophophora</taxon>
    </lineage>
</organism>
<proteinExistence type="inferred from homology"/>
<sequence>MPVSMAVCETANVVNAALRESLGGNSSAAGSSADQAKSGEESNGSLQNHIVANAKRILMAKIEYEEVPNYHESVLESLKSKYIVIKPGNPGAINGFGGKNNTGKVVGANGHDNNGARKQAEHPNNQSHHNNHNNHPHPTSNPNELPKPKRVLYPRENIRIGWKQSERKWQVGTGMINVGNTCYLNSTLQALLHIPALANWLVSEQAHLENCNVAESGGGCIVCAMAKTLLATQSNQSAVRPFLIYSKLKQICKHMVVGRQEDAHEFLRFLVEAMERAYLMRFRNYKELDQLVKETTPLGQIFGGYLRSEVRCLSCNHVSITFQHFQDLLLDIRKADTLEDAFEGHFSRERLEDMGYKCEGCKKKVSATKQFSLERAPITLCIQLKRFSMIGNKLTKQISFKPRIDLSKYAARSPAAQAQPLTYRLVSMVTHLGVSQHCGHYTAIGSTDTGSYYNFDDSYVRPIAMQSVCNTNAYIMFYELDLSQTASPAANRPNGMRLTNGHSTTPVPATTVSSPSPTRFIGPQLPPGGVNGYSNGNAQKTAIQFKQHHQQSQQNGFQLGTGKFQDTAKPPLVGAHAKGEANPAPTANGNKSSSTSSNNSSSSNHKSINQQQYLPISSEDEDSEDERTSRPSTVQLPSMPKMTDDHTEKPKSPVKIQAKTPIKTPLKSLVPYESASEEEEAPLPNPRKRRSGEDSSESDQESGQTNGHSKTNGSLTNGSASSSVHVNNSKLKTDAIDEIFKSLKKSADSDDDDDEEESSIQLTNGWHPQKQSQSQSKAPPSPKTPPSPAVIKSKTGIWKVTRNDEVDDIDDDDDEEEEATVKIQTPSKTHRNPFSSSKPSTDSPATPGAKRQKLLNGSPVKSHQQPRVGNGYQSEATSNGSTINELLKQSHRGYGSSVLSWNGKPAELEKETFELVCAKRIAGHGSVDGSDIVESSVAVNASSGSDSNDVVVIAVALLVDAREQRQRDLDDDEENEMDRGRQRKVKSGSAKGNNASNSTPGYNPFQEYEGQKRWNKNGGGGGGFPRFYNQNFRQNFQQRNKFKFNRFGGPGGAKFQQQRALQRHLAAGGGFSRRQPSAQQQQQQS</sequence>
<reference key="1">
    <citation type="journal article" date="2007" name="Nature">
        <title>Evolution of genes and genomes on the Drosophila phylogeny.</title>
        <authorList>
            <consortium name="Drosophila 12 genomes consortium"/>
        </authorList>
    </citation>
    <scope>NUCLEOTIDE SEQUENCE [LARGE SCALE GENOMIC DNA]</scope>
    <source>
        <strain>Tucson 14021-0224.01</strain>
    </source>
</reference>
<name>UBP36_DROER</name>